<protein>
    <recommendedName>
        <fullName>Actin, cytoplasmic 1</fullName>
        <ecNumber evidence="4">3.6.4.-</ecNumber>
    </recommendedName>
    <alternativeName>
        <fullName>Beta-actin</fullName>
    </alternativeName>
    <component>
        <recommendedName>
            <fullName>Actin, cytoplasmic 1, N-terminally processed</fullName>
        </recommendedName>
    </component>
</protein>
<keyword id="KW-0007">Acetylation</keyword>
<keyword id="KW-0067">ATP-binding</keyword>
<keyword id="KW-0963">Cytoplasm</keyword>
<keyword id="KW-0206">Cytoskeleton</keyword>
<keyword id="KW-0378">Hydrolase</keyword>
<keyword id="KW-0488">Methylation</keyword>
<keyword id="KW-0547">Nucleotide-binding</keyword>
<keyword id="KW-0539">Nucleus</keyword>
<keyword id="KW-0558">Oxidation</keyword>
<keyword id="KW-1185">Reference proteome</keyword>
<keyword id="KW-0832">Ubl conjugation</keyword>
<dbReference type="EC" id="3.6.4.-" evidence="4"/>
<dbReference type="EMBL" id="DQ838049">
    <property type="protein sequence ID" value="ABH06561.1"/>
    <property type="molecule type" value="mRNA"/>
</dbReference>
<dbReference type="SMR" id="Q0PGG4"/>
<dbReference type="Proteomes" id="UP000694520">
    <property type="component" value="Unplaced"/>
</dbReference>
<dbReference type="GO" id="GO:0015629">
    <property type="term" value="C:actin cytoskeleton"/>
    <property type="evidence" value="ECO:0000250"/>
    <property type="project" value="UniProtKB"/>
</dbReference>
<dbReference type="GO" id="GO:0005856">
    <property type="term" value="C:cytoskeleton"/>
    <property type="evidence" value="ECO:0000250"/>
    <property type="project" value="AgBase"/>
</dbReference>
<dbReference type="GO" id="GO:0097433">
    <property type="term" value="C:dense body"/>
    <property type="evidence" value="ECO:0000250"/>
    <property type="project" value="AgBase"/>
</dbReference>
<dbReference type="GO" id="GO:0005925">
    <property type="term" value="C:focal adhesion"/>
    <property type="evidence" value="ECO:0000250"/>
    <property type="project" value="AgBase"/>
</dbReference>
<dbReference type="GO" id="GO:0005634">
    <property type="term" value="C:nucleus"/>
    <property type="evidence" value="ECO:0000250"/>
    <property type="project" value="UniProtKB"/>
</dbReference>
<dbReference type="GO" id="GO:0005886">
    <property type="term" value="C:plasma membrane"/>
    <property type="evidence" value="ECO:0000250"/>
    <property type="project" value="AgBase"/>
</dbReference>
<dbReference type="GO" id="GO:0032991">
    <property type="term" value="C:protein-containing complex"/>
    <property type="evidence" value="ECO:0000250"/>
    <property type="project" value="UniProtKB"/>
</dbReference>
<dbReference type="GO" id="GO:0005524">
    <property type="term" value="F:ATP binding"/>
    <property type="evidence" value="ECO:0007669"/>
    <property type="project" value="UniProtKB-KW"/>
</dbReference>
<dbReference type="GO" id="GO:0016787">
    <property type="term" value="F:hydrolase activity"/>
    <property type="evidence" value="ECO:0007669"/>
    <property type="project" value="UniProtKB-KW"/>
</dbReference>
<dbReference type="CDD" id="cd10224">
    <property type="entry name" value="ASKHA_NBD_actin"/>
    <property type="match status" value="1"/>
</dbReference>
<dbReference type="FunFam" id="3.30.420.40:FF:000131">
    <property type="entry name" value="Actin, alpha skeletal muscle"/>
    <property type="match status" value="1"/>
</dbReference>
<dbReference type="FunFam" id="3.30.420.40:FF:000291">
    <property type="entry name" value="Actin, alpha skeletal muscle"/>
    <property type="match status" value="1"/>
</dbReference>
<dbReference type="FunFam" id="3.90.640.10:FF:000047">
    <property type="entry name" value="Actin, alpha skeletal muscle"/>
    <property type="match status" value="1"/>
</dbReference>
<dbReference type="FunFam" id="3.30.420.40:FF:000058">
    <property type="entry name" value="Putative actin-related protein 5"/>
    <property type="match status" value="1"/>
</dbReference>
<dbReference type="Gene3D" id="3.30.420.40">
    <property type="match status" value="2"/>
</dbReference>
<dbReference type="Gene3D" id="3.90.640.10">
    <property type="entry name" value="Actin, Chain A, domain 4"/>
    <property type="match status" value="1"/>
</dbReference>
<dbReference type="InterPro" id="IPR004000">
    <property type="entry name" value="Actin"/>
</dbReference>
<dbReference type="InterPro" id="IPR020902">
    <property type="entry name" value="Actin/actin-like_CS"/>
</dbReference>
<dbReference type="InterPro" id="IPR004001">
    <property type="entry name" value="Actin_CS"/>
</dbReference>
<dbReference type="InterPro" id="IPR043129">
    <property type="entry name" value="ATPase_NBD"/>
</dbReference>
<dbReference type="PANTHER" id="PTHR11937">
    <property type="entry name" value="ACTIN"/>
    <property type="match status" value="1"/>
</dbReference>
<dbReference type="Pfam" id="PF00022">
    <property type="entry name" value="Actin"/>
    <property type="match status" value="1"/>
</dbReference>
<dbReference type="PRINTS" id="PR00190">
    <property type="entry name" value="ACTIN"/>
</dbReference>
<dbReference type="SMART" id="SM00268">
    <property type="entry name" value="ACTIN"/>
    <property type="match status" value="1"/>
</dbReference>
<dbReference type="SUPFAM" id="SSF53067">
    <property type="entry name" value="Actin-like ATPase domain"/>
    <property type="match status" value="2"/>
</dbReference>
<dbReference type="PROSITE" id="PS00406">
    <property type="entry name" value="ACTINS_1"/>
    <property type="match status" value="1"/>
</dbReference>
<dbReference type="PROSITE" id="PS00432">
    <property type="entry name" value="ACTINS_2"/>
    <property type="match status" value="1"/>
</dbReference>
<dbReference type="PROSITE" id="PS01132">
    <property type="entry name" value="ACTINS_ACT_LIKE"/>
    <property type="match status" value="1"/>
</dbReference>
<gene>
    <name type="primary">ACTB</name>
</gene>
<organism>
    <name type="scientific">Bos mutus grunniens</name>
    <name type="common">Wild yak</name>
    <name type="synonym">Bos grunniens</name>
    <dbReference type="NCBI Taxonomy" id="30521"/>
    <lineage>
        <taxon>Eukaryota</taxon>
        <taxon>Metazoa</taxon>
        <taxon>Chordata</taxon>
        <taxon>Craniata</taxon>
        <taxon>Vertebrata</taxon>
        <taxon>Euteleostomi</taxon>
        <taxon>Mammalia</taxon>
        <taxon>Eutheria</taxon>
        <taxon>Laurasiatheria</taxon>
        <taxon>Artiodactyla</taxon>
        <taxon>Ruminantia</taxon>
        <taxon>Pecora</taxon>
        <taxon>Bovidae</taxon>
        <taxon>Bovinae</taxon>
        <taxon>Bos</taxon>
    </lineage>
</organism>
<name>ACTB_BOSMU</name>
<evidence type="ECO:0000250" key="1">
    <source>
        <dbReference type="UniProtKB" id="O18840"/>
    </source>
</evidence>
<evidence type="ECO:0000250" key="2">
    <source>
        <dbReference type="UniProtKB" id="P60709"/>
    </source>
</evidence>
<evidence type="ECO:0000250" key="3">
    <source>
        <dbReference type="UniProtKB" id="P60710"/>
    </source>
</evidence>
<evidence type="ECO:0000250" key="4">
    <source>
        <dbReference type="UniProtKB" id="P68137"/>
    </source>
</evidence>
<evidence type="ECO:0000250" key="5">
    <source>
        <dbReference type="UniProtKB" id="Q6QAQ1"/>
    </source>
</evidence>
<evidence type="ECO:0000305" key="6"/>
<sequence length="375" mass="41749">MDDDIAALVVDNGSGMCKAGFAGDDAPRAVFPSIVGRPRHQGVMVGMGQKDSYVGDEAQSKRGILTLKYPIEHGIVTNWDDMEKIWHHTFYNELRVAPEEHPVLLTEAPLNPEANREKMTQIMFETFNTPAMYVAIQAVLSLYASGRTTGIVMDSGDGVTHTVPIYEGYALPHAILRLDLAGRDLTDYLMKILTERGYSFTTTAEREIVRDIKEKLCYVALDFEQEMAIAASSSSLEKSYELPDGQVITIGNERFRCPEALFQPSFLGMESCGIHETTFNSIMKCDVDIRKDLYANTVLSGGTTMYPGIANRMQKEITALAPSTMKIKIIAPPERKYSVWIGGSILASLSTFQQMWISKQEYDESGPSIVHRKCF</sequence>
<feature type="chain" id="PRO_0000253487" description="Actin, cytoplasmic 1">
    <location>
        <begin position="1"/>
        <end position="375"/>
    </location>
</feature>
<feature type="initiator methionine" description="Removed; alternate" evidence="2">
    <location>
        <position position="1"/>
    </location>
</feature>
<feature type="chain" id="PRO_0000367065" description="Actin, cytoplasmic 1, N-terminally processed">
    <location>
        <begin position="2"/>
        <end position="375"/>
    </location>
</feature>
<feature type="modified residue" description="N-acetylmethionine" evidence="2">
    <location>
        <position position="1"/>
    </location>
</feature>
<feature type="modified residue" description="N-acetylaspartate; in Actin, cytoplasmic 1, N-terminally processed" evidence="2">
    <location>
        <position position="2"/>
    </location>
</feature>
<feature type="modified residue" description="Methionine (R)-sulfoxide" evidence="3">
    <location>
        <position position="44"/>
    </location>
</feature>
<feature type="modified residue" description="Methionine (R)-sulfoxide" evidence="3">
    <location>
        <position position="47"/>
    </location>
</feature>
<feature type="modified residue" description="Tele-methylhistidine" evidence="3">
    <location>
        <position position="73"/>
    </location>
</feature>
<feature type="modified residue" description="N6-methyllysine" evidence="2">
    <location>
        <position position="84"/>
    </location>
</feature>
<accession>Q0PGG4</accession>
<proteinExistence type="evidence at transcript level"/>
<comment type="function">
    <text evidence="2 5">Actin is a highly conserved protein that polymerizes to produce filaments that form cross-linked networks in the cytoplasm of cells (By similarity). Actin exists in both monomeric (G-actin) and polymeric (F-actin) forms, both forms playing key functions, such as cell motility and contraction (By similarity). In addition to their role in the cytoplasmic cytoskeleton, G- and F-actin also localize in the nucleus, and regulate gene transcription and motility and repair of damaged DNA (By similarity). Plays a role in the assembly of the gamma-tubulin ring complex (gTuRC), which regulates the minus-end nucleation of alpha-beta tubulin heterodimers that grow into microtubule protafilaments (By similarity). Part of the ACTR1A/ACTB filament around which the dynactin complex is built (By similarity). The dynactin multiprotein complex activates the molecular motor dynein for ultra-processive transport along microtubules (By similarity).</text>
</comment>
<comment type="catalytic activity">
    <reaction evidence="4">
        <text>ATP + H2O = ADP + phosphate + H(+)</text>
        <dbReference type="Rhea" id="RHEA:13065"/>
        <dbReference type="ChEBI" id="CHEBI:15377"/>
        <dbReference type="ChEBI" id="CHEBI:15378"/>
        <dbReference type="ChEBI" id="CHEBI:30616"/>
        <dbReference type="ChEBI" id="CHEBI:43474"/>
        <dbReference type="ChEBI" id="CHEBI:456216"/>
    </reaction>
</comment>
<comment type="subunit">
    <text evidence="1 2 3 5">Polymerization of globular actin (G-actin) leads to a structural filament (F-actin) in the form of a two-stranded helix (By similarity). Each actin can bind to 4 others (By similarity). Identified in a IGF2BP1-dependent mRNP granule complex containing untranslated mRNAs (By similarity). Component of the BAF complex, which includes at least actin (ACTB), ARID1A, ARID1B/BAF250, SMARCA2, SMARCA4/BRG1, ACTL6A/BAF53, ACTL6B/BAF53B, SMARCE1/BAF57 SMARCC1/BAF155, SMARCC2/BAF170, SMARCB1/SNF5/INI1, and one or more of SMARCD1/BAF60A, SMARCD2/BAF60B, or SMARCD3/BAF60C (By similarity). In muscle cells, the BAF complex also contains DPF3 (By similarity). Found in a complex with XPO6, Ran, ACTB and PFN1 (By similarity). Interacts with PFN1 (By similarity). Interacts with XPO6 and EMD (By similarity). Interacts with ERBB2 (By similarity). Interacts with GCSAM (By similarity). Interacts with TBC1D21 (By similarity). Interacts with CPNE1 (via VWFA domain) and CPNE4 (via VWFA domain) (By similarity). Interacts with DHX9 (via C-terminus); this interaction is direct and mediates the attachment to nuclear ribonucleoprotein complexes (By similarity). Interacts with FAM107A (By similarity). Associates with the gamma-tubulin ring complex (gTuRC) consisting of TUBGCP2, TUBGCP3, TUBGCP4, TUBGCP5 and TUBGCP6 and gamma-tubulin TUBG1 or TUBG2; within the complex, interacts with TUBGCP3 and TUBGCP6 to form a luminal bridge with MZT1 that stabilizes the initial structure during complex assembly (By similarity). Part of the ACTR1A/ACTB filament around which the dynactin complex is built (By similarity). The filament contains 8 copies of ACTR1A and 1 ACTB (By similarity). Interacts with TPRN which forms ring-like structures in the stereocilium taper region; the interaction may stabilize stereocilia in inner ear hair cells (By similarity). Interacts with AMOTL2 (via N-terminus), the interaction facilitates binding of cell junction complexes to actin fibers in endothelial cells (By similarity).</text>
</comment>
<comment type="subcellular location">
    <subcellularLocation>
        <location evidence="2">Cytoplasm</location>
        <location evidence="2">Cytoskeleton</location>
    </subcellularLocation>
    <subcellularLocation>
        <location evidence="2">Nucleus</location>
    </subcellularLocation>
    <text evidence="2">Localized in cytoplasmic mRNP granules containing untranslated mRNAs.</text>
</comment>
<comment type="PTM">
    <molecule>Actin, cytoplasmic 1</molecule>
    <text evidence="2">N-terminal cleavage of acetylated methionine of immature cytoplasmic actin by ACTMAP.</text>
</comment>
<comment type="PTM">
    <text evidence="2">ISGylated.</text>
</comment>
<comment type="PTM">
    <text evidence="3">Oxidation of Met-44 and Met-47 by MICALs (MICAL1, MICAL2 or MICAL3) to form methionine sulfoxide promotes actin filament depolymerization. MICAL1 and MICAL2 produce the (R)-S-oxide form. The (R)-S-oxide form is reverted by MSRB1 and MSRB2, which promote actin repolymerization.</text>
</comment>
<comment type="PTM">
    <text evidence="2">Monomethylation at Lys-84 (K84me1) regulates actin-myosin interaction and actomyosin-dependent processes. Demethylation by ALKBH4 is required for maintaining actomyosin dynamics supporting normal cleavage furrow ingression during cytokinesis and cell migration.</text>
</comment>
<comment type="PTM">
    <molecule>Actin, cytoplasmic 1, N-terminally processed</molecule>
    <text evidence="2">N-terminal acetylation by NAA80 affects actin filament depolymerization and elongation, including elongation driven by formins. In contrast, filament nucleation by the Arp2/3 complex is not affected.</text>
</comment>
<comment type="PTM">
    <text evidence="2 3">Methylated at His-73 by SETD3 (By similarity). Methylation at His-73 is required for smooth muscle contraction of the laboring uterus during delivery (By similarity).</text>
</comment>
<comment type="miscellaneous">
    <text evidence="2">In vertebrates 3 main groups of actin isoforms, alpha, beta and gamma have been identified. The alpha actins are found in muscle tissues and are a major constituent of the contractile apparatus. The beta and gamma actins coexist in most cell types as components of the cytoskeleton and as mediators of internal cell motility.</text>
</comment>
<comment type="similarity">
    <text evidence="6">Belongs to the actin family.</text>
</comment>
<reference key="1">
    <citation type="journal article" date="2006" name="Biochem. Biophys. Res. Commun.">
        <title>Hypoxia-inducible factor 1alpha cDNA cloning and its mRNA and protein tissue specific expression in domestic yak (Bos grunniens) from Qinghai-Tibetan plateau.</title>
        <authorList>
            <person name="Wang D.P."/>
            <person name="Li H.G."/>
            <person name="Li Y.J."/>
            <person name="Guo S.C."/>
            <person name="Yang J."/>
            <person name="Qi D.L."/>
            <person name="Jin C."/>
            <person name="Zhao X.Q."/>
        </authorList>
    </citation>
    <scope>NUCLEOTIDE SEQUENCE [MRNA]</scope>
</reference>